<reference key="1">
    <citation type="journal article" date="2006" name="J. Bacteriol.">
        <title>The genome sequence of the obligately chemolithoautotrophic, facultatively anaerobic bacterium Thiobacillus denitrificans.</title>
        <authorList>
            <person name="Beller H.R."/>
            <person name="Chain P.S."/>
            <person name="Letain T.E."/>
            <person name="Chakicherla A."/>
            <person name="Larimer F.W."/>
            <person name="Richardson P.M."/>
            <person name="Coleman M.A."/>
            <person name="Wood A.P."/>
            <person name="Kelly D.P."/>
        </authorList>
    </citation>
    <scope>NUCLEOTIDE SEQUENCE [LARGE SCALE GENOMIC DNA]</scope>
    <source>
        <strain>ATCC 25259 / T1</strain>
    </source>
</reference>
<dbReference type="EMBL" id="CP000116">
    <property type="protein sequence ID" value="AAZ96963.1"/>
    <property type="molecule type" value="Genomic_DNA"/>
</dbReference>
<dbReference type="RefSeq" id="WP_011311522.1">
    <property type="nucleotide sequence ID" value="NC_007404.1"/>
</dbReference>
<dbReference type="SMR" id="Q3SK31"/>
<dbReference type="STRING" id="292415.Tbd_1010"/>
<dbReference type="KEGG" id="tbd:Tbd_1010"/>
<dbReference type="eggNOG" id="COG0292">
    <property type="taxonomic scope" value="Bacteria"/>
</dbReference>
<dbReference type="HOGENOM" id="CLU_123265_0_1_4"/>
<dbReference type="OrthoDB" id="9808966at2"/>
<dbReference type="Proteomes" id="UP000008291">
    <property type="component" value="Chromosome"/>
</dbReference>
<dbReference type="GO" id="GO:1990904">
    <property type="term" value="C:ribonucleoprotein complex"/>
    <property type="evidence" value="ECO:0007669"/>
    <property type="project" value="UniProtKB-KW"/>
</dbReference>
<dbReference type="GO" id="GO:0005840">
    <property type="term" value="C:ribosome"/>
    <property type="evidence" value="ECO:0007669"/>
    <property type="project" value="UniProtKB-KW"/>
</dbReference>
<dbReference type="GO" id="GO:0019843">
    <property type="term" value="F:rRNA binding"/>
    <property type="evidence" value="ECO:0007669"/>
    <property type="project" value="UniProtKB-UniRule"/>
</dbReference>
<dbReference type="GO" id="GO:0003735">
    <property type="term" value="F:structural constituent of ribosome"/>
    <property type="evidence" value="ECO:0007669"/>
    <property type="project" value="InterPro"/>
</dbReference>
<dbReference type="GO" id="GO:0000027">
    <property type="term" value="P:ribosomal large subunit assembly"/>
    <property type="evidence" value="ECO:0007669"/>
    <property type="project" value="UniProtKB-UniRule"/>
</dbReference>
<dbReference type="GO" id="GO:0006412">
    <property type="term" value="P:translation"/>
    <property type="evidence" value="ECO:0007669"/>
    <property type="project" value="InterPro"/>
</dbReference>
<dbReference type="CDD" id="cd07026">
    <property type="entry name" value="Ribosomal_L20"/>
    <property type="match status" value="1"/>
</dbReference>
<dbReference type="FunFam" id="1.10.1900.20:FF:000001">
    <property type="entry name" value="50S ribosomal protein L20"/>
    <property type="match status" value="1"/>
</dbReference>
<dbReference type="Gene3D" id="6.10.160.10">
    <property type="match status" value="1"/>
</dbReference>
<dbReference type="Gene3D" id="1.10.1900.20">
    <property type="entry name" value="Ribosomal protein L20"/>
    <property type="match status" value="1"/>
</dbReference>
<dbReference type="HAMAP" id="MF_00382">
    <property type="entry name" value="Ribosomal_bL20"/>
    <property type="match status" value="1"/>
</dbReference>
<dbReference type="InterPro" id="IPR005813">
    <property type="entry name" value="Ribosomal_bL20"/>
</dbReference>
<dbReference type="InterPro" id="IPR049946">
    <property type="entry name" value="RIBOSOMAL_L20_CS"/>
</dbReference>
<dbReference type="InterPro" id="IPR035566">
    <property type="entry name" value="Ribosomal_protein_bL20_C"/>
</dbReference>
<dbReference type="NCBIfam" id="TIGR01032">
    <property type="entry name" value="rplT_bact"/>
    <property type="match status" value="1"/>
</dbReference>
<dbReference type="PANTHER" id="PTHR10986">
    <property type="entry name" value="39S RIBOSOMAL PROTEIN L20"/>
    <property type="match status" value="1"/>
</dbReference>
<dbReference type="Pfam" id="PF00453">
    <property type="entry name" value="Ribosomal_L20"/>
    <property type="match status" value="1"/>
</dbReference>
<dbReference type="PRINTS" id="PR00062">
    <property type="entry name" value="RIBOSOMALL20"/>
</dbReference>
<dbReference type="SUPFAM" id="SSF74731">
    <property type="entry name" value="Ribosomal protein L20"/>
    <property type="match status" value="1"/>
</dbReference>
<dbReference type="PROSITE" id="PS00937">
    <property type="entry name" value="RIBOSOMAL_L20"/>
    <property type="match status" value="1"/>
</dbReference>
<proteinExistence type="inferred from homology"/>
<name>RL20_THIDA</name>
<accession>Q3SK31</accession>
<evidence type="ECO:0000255" key="1">
    <source>
        <dbReference type="HAMAP-Rule" id="MF_00382"/>
    </source>
</evidence>
<evidence type="ECO:0000305" key="2"/>
<comment type="function">
    <text evidence="1">Binds directly to 23S ribosomal RNA and is necessary for the in vitro assembly process of the 50S ribosomal subunit. It is not involved in the protein synthesizing functions of that subunit.</text>
</comment>
<comment type="similarity">
    <text evidence="1">Belongs to the bacterial ribosomal protein bL20 family.</text>
</comment>
<sequence length="119" mass="13603">MPRVKRGVTARASHKKILDAAKGYRGRRKNVFRVANEAVMKAGQYQYRDRRQRKRQFRALWIARINAAARQHGLTYSVFMNGLSRAEIGVDRKVLSDIAIFDKDAFAKIVDQVKAKLAA</sequence>
<feature type="chain" id="PRO_0000243753" description="Large ribosomal subunit protein bL20">
    <location>
        <begin position="1"/>
        <end position="119"/>
    </location>
</feature>
<organism>
    <name type="scientific">Thiobacillus denitrificans (strain ATCC 25259 / T1)</name>
    <dbReference type="NCBI Taxonomy" id="292415"/>
    <lineage>
        <taxon>Bacteria</taxon>
        <taxon>Pseudomonadati</taxon>
        <taxon>Pseudomonadota</taxon>
        <taxon>Betaproteobacteria</taxon>
        <taxon>Nitrosomonadales</taxon>
        <taxon>Thiobacillaceae</taxon>
        <taxon>Thiobacillus</taxon>
    </lineage>
</organism>
<keyword id="KW-1185">Reference proteome</keyword>
<keyword id="KW-0687">Ribonucleoprotein</keyword>
<keyword id="KW-0689">Ribosomal protein</keyword>
<keyword id="KW-0694">RNA-binding</keyword>
<keyword id="KW-0699">rRNA-binding</keyword>
<protein>
    <recommendedName>
        <fullName evidence="1">Large ribosomal subunit protein bL20</fullName>
    </recommendedName>
    <alternativeName>
        <fullName evidence="2">50S ribosomal protein L20</fullName>
    </alternativeName>
</protein>
<gene>
    <name evidence="1" type="primary">rplT</name>
    <name type="ordered locus">Tbd_1010</name>
</gene>